<accession>C0HM46</accession>
<keyword id="KW-0903">Direct protein sequencing</keyword>
<keyword id="KW-0646">Protease inhibitor</keyword>
<keyword id="KW-0722">Serine protease inhibitor</keyword>
<name>KTI1_SELUD</name>
<organism>
    <name type="scientific">Selenicereus undatus</name>
    <name type="common">Pitahaya</name>
    <name type="synonym">Hylocereus undatus</name>
    <dbReference type="NCBI Taxonomy" id="176265"/>
    <lineage>
        <taxon>Eukaryota</taxon>
        <taxon>Viridiplantae</taxon>
        <taxon>Streptophyta</taxon>
        <taxon>Embryophyta</taxon>
        <taxon>Tracheophyta</taxon>
        <taxon>Spermatophyta</taxon>
        <taxon>Magnoliopsida</taxon>
        <taxon>eudicotyledons</taxon>
        <taxon>Gunneridae</taxon>
        <taxon>Pentapetalae</taxon>
        <taxon>Caryophyllales</taxon>
        <taxon>Cactineae</taxon>
        <taxon>Cactaceae</taxon>
        <taxon>Cactoideae</taxon>
        <taxon>Hylocereeae</taxon>
        <taxon>Selenicereus</taxon>
    </lineage>
</organism>
<reference key="1">
    <citation type="submission" date="2022-06" db="UniProtKB">
        <title>Identification of a new allergen bound to IgE on seeds of Selenicereus undatu.</title>
        <authorList>
            <person name="Mengzhen H."/>
            <person name="Huilian C."/>
        </authorList>
    </citation>
    <scope>PROTEIN SEQUENCE</scope>
</reference>
<comment type="function">
    <text evidence="1">Exhibits Kunitz trypsin protease inhibitor activity.</text>
</comment>
<comment type="similarity">
    <text evidence="4">Belongs to the protease inhibitor I3 (leguminous Kunitz-type inhibitor) family.</text>
</comment>
<proteinExistence type="evidence at protein level"/>
<feature type="chain" id="PRO_0000457725" description="Kunitz-type trypsin inhibitor 1">
    <location>
        <begin position="1" status="less than"/>
        <end position="115" status="greater than"/>
    </location>
</feature>
<feature type="non-consecutive residues" evidence="2">
    <location>
        <begin position="24"/>
        <end position="25"/>
    </location>
</feature>
<feature type="non-consecutive residues" evidence="2">
    <location>
        <begin position="30"/>
        <end position="31"/>
    </location>
</feature>
<feature type="non-consecutive residues" evidence="2">
    <location>
        <begin position="59"/>
        <end position="60"/>
    </location>
</feature>
<feature type="non-consecutive residues" evidence="2">
    <location>
        <begin position="94"/>
        <end position="95"/>
    </location>
</feature>
<feature type="non-terminal residue" evidence="2">
    <location>
        <position position="1"/>
    </location>
</feature>
<feature type="non-terminal residue" evidence="2">
    <location>
        <position position="115"/>
    </location>
</feature>
<protein>
    <recommendedName>
        <fullName evidence="3">Kunitz-type trypsin inhibitor 1</fullName>
    </recommendedName>
</protein>
<evidence type="ECO:0000250" key="1">
    <source>
        <dbReference type="UniProtKB" id="Q8RXD5"/>
    </source>
</evidence>
<evidence type="ECO:0000269" key="2">
    <source ref="1"/>
</evidence>
<evidence type="ECO:0000303" key="3">
    <source ref="1"/>
</evidence>
<evidence type="ECO:0000305" key="4"/>
<sequence>LVLDVDGNPLEVGSEYYIGRAVGFYVVERFSEVDRGDPLSSDVQIDSGLSAYCRSDGFWGVPPSSFRIEKTEGFPNAYKIAYSPPTTSSQQQRYPDLHSGLNLVGLTDDSARVVL</sequence>
<dbReference type="GO" id="GO:0004867">
    <property type="term" value="F:serine-type endopeptidase inhibitor activity"/>
    <property type="evidence" value="ECO:0007669"/>
    <property type="project" value="UniProtKB-KW"/>
</dbReference>
<dbReference type="InterPro" id="IPR011065">
    <property type="entry name" value="Kunitz_inhibitor_STI-like_sf"/>
</dbReference>
<dbReference type="InterPro" id="IPR002160">
    <property type="entry name" value="Prot_inh_Kunz-lg"/>
</dbReference>
<dbReference type="SUPFAM" id="SSF50386">
    <property type="entry name" value="STI-like"/>
    <property type="match status" value="1"/>
</dbReference>
<dbReference type="PROSITE" id="PS00283">
    <property type="entry name" value="SOYBEAN_KUNITZ"/>
    <property type="match status" value="1"/>
</dbReference>